<name>ZG64_XENLA</name>
<proteinExistence type="inferred from homology"/>
<dbReference type="PIR" id="S06581">
    <property type="entry name" value="S06581"/>
</dbReference>
<dbReference type="SMR" id="P18732"/>
<dbReference type="Proteomes" id="UP000186698">
    <property type="component" value="Unplaced"/>
</dbReference>
<dbReference type="GO" id="GO:0005634">
    <property type="term" value="C:nucleus"/>
    <property type="evidence" value="ECO:0007669"/>
    <property type="project" value="UniProtKB-SubCell"/>
</dbReference>
<dbReference type="GO" id="GO:0000981">
    <property type="term" value="F:DNA-binding transcription factor activity, RNA polymerase II-specific"/>
    <property type="evidence" value="ECO:0007669"/>
    <property type="project" value="TreeGrafter"/>
</dbReference>
<dbReference type="GO" id="GO:0000978">
    <property type="term" value="F:RNA polymerase II cis-regulatory region sequence-specific DNA binding"/>
    <property type="evidence" value="ECO:0007669"/>
    <property type="project" value="TreeGrafter"/>
</dbReference>
<dbReference type="GO" id="GO:0008270">
    <property type="term" value="F:zinc ion binding"/>
    <property type="evidence" value="ECO:0007669"/>
    <property type="project" value="UniProtKB-KW"/>
</dbReference>
<dbReference type="FunFam" id="3.30.160.60:FF:002282">
    <property type="entry name" value="Wu:fb97d07 protein"/>
    <property type="match status" value="1"/>
</dbReference>
<dbReference type="FunFam" id="3.30.160.60:FF:001732">
    <property type="entry name" value="Zgc:162936"/>
    <property type="match status" value="1"/>
</dbReference>
<dbReference type="FunFam" id="3.30.160.60:FF:000759">
    <property type="entry name" value="zinc finger protein 16"/>
    <property type="match status" value="1"/>
</dbReference>
<dbReference type="FunFam" id="3.30.160.60:FF:000128">
    <property type="entry name" value="zinc finger protein 268 isoform X1"/>
    <property type="match status" value="1"/>
</dbReference>
<dbReference type="FunFam" id="3.30.160.60:FF:002343">
    <property type="entry name" value="Zinc finger protein 33A"/>
    <property type="match status" value="1"/>
</dbReference>
<dbReference type="FunFam" id="3.30.160.60:FF:002004">
    <property type="entry name" value="Zinc finger protein 473"/>
    <property type="match status" value="1"/>
</dbReference>
<dbReference type="FunFam" id="3.30.160.60:FF:000275">
    <property type="entry name" value="zinc finger protein 90 homolog"/>
    <property type="match status" value="1"/>
</dbReference>
<dbReference type="Gene3D" id="3.30.160.60">
    <property type="entry name" value="Classic Zinc Finger"/>
    <property type="match status" value="7"/>
</dbReference>
<dbReference type="InterPro" id="IPR036236">
    <property type="entry name" value="Znf_C2H2_sf"/>
</dbReference>
<dbReference type="InterPro" id="IPR013087">
    <property type="entry name" value="Znf_C2H2_type"/>
</dbReference>
<dbReference type="PANTHER" id="PTHR23226:SF416">
    <property type="entry name" value="FI01424P"/>
    <property type="match status" value="1"/>
</dbReference>
<dbReference type="PANTHER" id="PTHR23226">
    <property type="entry name" value="ZINC FINGER AND SCAN DOMAIN-CONTAINING"/>
    <property type="match status" value="1"/>
</dbReference>
<dbReference type="Pfam" id="PF00096">
    <property type="entry name" value="zf-C2H2"/>
    <property type="match status" value="6"/>
</dbReference>
<dbReference type="SMART" id="SM00355">
    <property type="entry name" value="ZnF_C2H2"/>
    <property type="match status" value="7"/>
</dbReference>
<dbReference type="SUPFAM" id="SSF57667">
    <property type="entry name" value="beta-beta-alpha zinc fingers"/>
    <property type="match status" value="4"/>
</dbReference>
<dbReference type="PROSITE" id="PS00028">
    <property type="entry name" value="ZINC_FINGER_C2H2_1"/>
    <property type="match status" value="7"/>
</dbReference>
<dbReference type="PROSITE" id="PS50157">
    <property type="entry name" value="ZINC_FINGER_C2H2_2"/>
    <property type="match status" value="7"/>
</dbReference>
<feature type="chain" id="PRO_0000047804" description="Gastrula zinc finger protein XlCGF64.1">
    <location>
        <begin position="1" status="less than"/>
        <end position="196" status="greater than"/>
    </location>
</feature>
<feature type="zinc finger region" description="C2H2-type 1" evidence="1">
    <location>
        <begin position="6"/>
        <end position="28"/>
    </location>
</feature>
<feature type="zinc finger region" description="C2H2-type 2" evidence="1">
    <location>
        <begin position="34"/>
        <end position="56"/>
    </location>
</feature>
<feature type="zinc finger region" description="C2H2-type 3" evidence="1">
    <location>
        <begin position="62"/>
        <end position="84"/>
    </location>
</feature>
<feature type="zinc finger region" description="C2H2-type 4" evidence="1">
    <location>
        <begin position="90"/>
        <end position="112"/>
    </location>
</feature>
<feature type="zinc finger region" description="C2H2-type 5" evidence="1">
    <location>
        <begin position="118"/>
        <end position="140"/>
    </location>
</feature>
<feature type="zinc finger region" description="C2H2-type 6" evidence="1">
    <location>
        <begin position="146"/>
        <end position="168"/>
    </location>
</feature>
<feature type="zinc finger region" description="C2H2-type 7" evidence="1">
    <location>
        <begin position="174"/>
        <end position="196"/>
    </location>
</feature>
<feature type="non-terminal residue">
    <location>
        <position position="1"/>
    </location>
</feature>
<feature type="non-terminal residue">
    <location>
        <position position="196"/>
    </location>
</feature>
<sequence length="196" mass="23052">PSGKQYECPECGKTFKYKNSLTIHQRGHTEEKPFMCTQCGKCFRQKKALRRHQFIHTGEKPYVCTECEKRFLEKSQLILHQRGHTGEKPFTCTECGESFRHKQVLMRHQFIHTGEKPYECTQCGEGFLLKSKLIHHQRGHTGEKPFMCTECGKGFRQKQVLIEHQFIHTGEKPLMCTDCGKHFRQKHVLRLHKLSH</sequence>
<reference key="1">
    <citation type="journal article" date="1989" name="J. Mol. Biol.">
        <title>Second-order repeats in Xenopus laevis finger proteins.</title>
        <authorList>
            <person name="Nietfeld W."/>
            <person name="El-Baradi T."/>
            <person name="Mentzel H."/>
            <person name="Pieler T."/>
            <person name="Koester M."/>
            <person name="Poeting A."/>
            <person name="Knoechel W."/>
        </authorList>
    </citation>
    <scope>NUCLEOTIDE SEQUENCE</scope>
</reference>
<protein>
    <recommendedName>
        <fullName>Gastrula zinc finger protein XlCGF64.1</fullName>
    </recommendedName>
</protein>
<organism>
    <name type="scientific">Xenopus laevis</name>
    <name type="common">African clawed frog</name>
    <dbReference type="NCBI Taxonomy" id="8355"/>
    <lineage>
        <taxon>Eukaryota</taxon>
        <taxon>Metazoa</taxon>
        <taxon>Chordata</taxon>
        <taxon>Craniata</taxon>
        <taxon>Vertebrata</taxon>
        <taxon>Euteleostomi</taxon>
        <taxon>Amphibia</taxon>
        <taxon>Batrachia</taxon>
        <taxon>Anura</taxon>
        <taxon>Pipoidea</taxon>
        <taxon>Pipidae</taxon>
        <taxon>Xenopodinae</taxon>
        <taxon>Xenopus</taxon>
        <taxon>Xenopus</taxon>
    </lineage>
</organism>
<evidence type="ECO:0000255" key="1">
    <source>
        <dbReference type="PROSITE-ProRule" id="PRU00042"/>
    </source>
</evidence>
<evidence type="ECO:0000305" key="2"/>
<accession>P18732</accession>
<keyword id="KW-0238">DNA-binding</keyword>
<keyword id="KW-0479">Metal-binding</keyword>
<keyword id="KW-0539">Nucleus</keyword>
<keyword id="KW-1185">Reference proteome</keyword>
<keyword id="KW-0677">Repeat</keyword>
<keyword id="KW-0804">Transcription</keyword>
<keyword id="KW-0805">Transcription regulation</keyword>
<keyword id="KW-0862">Zinc</keyword>
<keyword id="KW-0863">Zinc-finger</keyword>
<comment type="function">
    <text>May be involved in transcriptional regulation.</text>
</comment>
<comment type="subcellular location">
    <subcellularLocation>
        <location evidence="2">Nucleus</location>
    </subcellularLocation>
</comment>
<comment type="similarity">
    <text evidence="2">Belongs to the krueppel C2H2-type zinc-finger protein family.</text>
</comment>